<protein>
    <recommendedName>
        <fullName evidence="1">UPF0391 membrane protein Aave_0978</fullName>
    </recommendedName>
</protein>
<proteinExistence type="inferred from homology"/>
<dbReference type="EMBL" id="CP000512">
    <property type="protein sequence ID" value="ABM31576.1"/>
    <property type="molecule type" value="Genomic_DNA"/>
</dbReference>
<dbReference type="RefSeq" id="WP_011794134.1">
    <property type="nucleotide sequence ID" value="NC_008752.1"/>
</dbReference>
<dbReference type="STRING" id="397945.Aave_0978"/>
<dbReference type="KEGG" id="aav:Aave_0978"/>
<dbReference type="eggNOG" id="COG5487">
    <property type="taxonomic scope" value="Bacteria"/>
</dbReference>
<dbReference type="HOGENOM" id="CLU_187346_1_1_4"/>
<dbReference type="Proteomes" id="UP000002596">
    <property type="component" value="Chromosome"/>
</dbReference>
<dbReference type="GO" id="GO:0005886">
    <property type="term" value="C:plasma membrane"/>
    <property type="evidence" value="ECO:0007669"/>
    <property type="project" value="UniProtKB-SubCell"/>
</dbReference>
<dbReference type="HAMAP" id="MF_01361">
    <property type="entry name" value="UPF0391"/>
    <property type="match status" value="1"/>
</dbReference>
<dbReference type="InterPro" id="IPR009760">
    <property type="entry name" value="DUF1328"/>
</dbReference>
<dbReference type="NCBIfam" id="NF010226">
    <property type="entry name" value="PRK13682.1-1"/>
    <property type="match status" value="1"/>
</dbReference>
<dbReference type="NCBIfam" id="NF010235">
    <property type="entry name" value="PRK13682.2-6"/>
    <property type="match status" value="1"/>
</dbReference>
<dbReference type="Pfam" id="PF07043">
    <property type="entry name" value="DUF1328"/>
    <property type="match status" value="1"/>
</dbReference>
<dbReference type="PIRSF" id="PIRSF036466">
    <property type="entry name" value="UCP036466"/>
    <property type="match status" value="1"/>
</dbReference>
<organism>
    <name type="scientific">Paracidovorax citrulli (strain AAC00-1)</name>
    <name type="common">Acidovorax citrulli</name>
    <dbReference type="NCBI Taxonomy" id="397945"/>
    <lineage>
        <taxon>Bacteria</taxon>
        <taxon>Pseudomonadati</taxon>
        <taxon>Pseudomonadota</taxon>
        <taxon>Betaproteobacteria</taxon>
        <taxon>Burkholderiales</taxon>
        <taxon>Comamonadaceae</taxon>
        <taxon>Paracidovorax</taxon>
    </lineage>
</organism>
<accession>A1TKT8</accession>
<reference key="1">
    <citation type="submission" date="2006-12" db="EMBL/GenBank/DDBJ databases">
        <title>Complete sequence of Acidovorax avenae subsp. citrulli AAC00-1.</title>
        <authorList>
            <person name="Copeland A."/>
            <person name="Lucas S."/>
            <person name="Lapidus A."/>
            <person name="Barry K."/>
            <person name="Detter J.C."/>
            <person name="Glavina del Rio T."/>
            <person name="Dalin E."/>
            <person name="Tice H."/>
            <person name="Pitluck S."/>
            <person name="Kiss H."/>
            <person name="Brettin T."/>
            <person name="Bruce D."/>
            <person name="Han C."/>
            <person name="Tapia R."/>
            <person name="Gilna P."/>
            <person name="Schmutz J."/>
            <person name="Larimer F."/>
            <person name="Land M."/>
            <person name="Hauser L."/>
            <person name="Kyrpides N."/>
            <person name="Kim E."/>
            <person name="Stahl D."/>
            <person name="Richardson P."/>
        </authorList>
    </citation>
    <scope>NUCLEOTIDE SEQUENCE [LARGE SCALE GENOMIC DNA]</scope>
    <source>
        <strain>AAC00-1</strain>
    </source>
</reference>
<keyword id="KW-1003">Cell membrane</keyword>
<keyword id="KW-0472">Membrane</keyword>
<keyword id="KW-0812">Transmembrane</keyword>
<keyword id="KW-1133">Transmembrane helix</keyword>
<feature type="chain" id="PRO_5000207993" description="UPF0391 membrane protein Aave_0978">
    <location>
        <begin position="1"/>
        <end position="61"/>
    </location>
</feature>
<feature type="transmembrane region" description="Helical" evidence="1">
    <location>
        <begin position="5"/>
        <end position="25"/>
    </location>
</feature>
<feature type="transmembrane region" description="Helical" evidence="1">
    <location>
        <begin position="33"/>
        <end position="53"/>
    </location>
</feature>
<gene>
    <name type="ordered locus">Aave_0978</name>
</gene>
<evidence type="ECO:0000255" key="1">
    <source>
        <dbReference type="HAMAP-Rule" id="MF_01361"/>
    </source>
</evidence>
<comment type="subcellular location">
    <subcellularLocation>
        <location evidence="1">Cell membrane</location>
        <topology evidence="1">Multi-pass membrane protein</topology>
    </subcellularLocation>
</comment>
<comment type="similarity">
    <text evidence="1">Belongs to the UPF0391 family.</text>
</comment>
<sequence length="61" mass="6169">MLKYAIIFAIISLIAGALGFSGVAAGAAGIAKILFFLFLVVAVIFIVLAVLGVGAARSVMK</sequence>
<name>Y978_PARC0</name>